<name>TRM10_SCHPO</name>
<accession>O14214</accession>
<sequence length="304" mass="35470">MENKDALDIGKDDTNTSEADVSKNETQEQPVLSKSALKRLKRQQEWDAGREKRAEMRREKKRLRKEERKRKIEAGEVVKSQKKRIRLGKVVPSSIRIVLDCAFDDLMNDKEINSLCQQVTRCHSANRTALHPVELFATNFGGRLKTRQDFVLKGQQNNWKRYNPTTKSYLEEFESQKEKLVYLSADSDNTITELDEDKIYIIGAIVDKNRYKNLCQNKASEQGIKTAKLPIDEYIKITDRKILTVNQVFEILSLWLEYRDWEKAFMEVIPKRKGILLKSDESFDVSEDTRSQSNQSDSELEKEN</sequence>
<proteinExistence type="evidence at protein level"/>
<comment type="function">
    <text evidence="5">S-adenosyl-L-methionine-dependent guanine N(1)-methyltransferase that catalyzes the formation of N(1)-methylguanine at position 9 (m1G9) in cytoplasmic tRNA.</text>
</comment>
<comment type="catalytic activity">
    <reaction evidence="5">
        <text>guanosine(9) in tRNA + S-adenosyl-L-methionine = N(1)-methylguanosine(9) in tRNA + S-adenosyl-L-homocysteine + H(+)</text>
        <dbReference type="Rhea" id="RHEA:43156"/>
        <dbReference type="Rhea" id="RHEA-COMP:10367"/>
        <dbReference type="Rhea" id="RHEA-COMP:10368"/>
        <dbReference type="ChEBI" id="CHEBI:15378"/>
        <dbReference type="ChEBI" id="CHEBI:57856"/>
        <dbReference type="ChEBI" id="CHEBI:59789"/>
        <dbReference type="ChEBI" id="CHEBI:73542"/>
        <dbReference type="ChEBI" id="CHEBI:74269"/>
        <dbReference type="EC" id="2.1.1.221"/>
    </reaction>
</comment>
<comment type="biophysicochemical properties">
    <kinetics>
        <KM evidence="5">3.2 uM for tRNA(Gly)</KM>
        <text evidence="5">kcat is 0.16 min(-1) for tRNA(Gly) (m1G9)-methylation.</text>
    </kinetics>
</comment>
<comment type="subunit">
    <text evidence="5">Monomer.</text>
</comment>
<comment type="subcellular location">
    <subcellularLocation>
        <location evidence="1">Cytoplasm</location>
    </subcellularLocation>
    <subcellularLocation>
        <location evidence="1">Nucleus</location>
    </subcellularLocation>
</comment>
<comment type="similarity">
    <text evidence="2">Belongs to the class IV-like SAM-binding methyltransferase superfamily. TRM10 family.</text>
</comment>
<evidence type="ECO:0000250" key="1">
    <source>
        <dbReference type="UniProtKB" id="Q12400"/>
    </source>
</evidence>
<evidence type="ECO:0000255" key="2">
    <source>
        <dbReference type="PROSITE-ProRule" id="PRU01012"/>
    </source>
</evidence>
<evidence type="ECO:0000256" key="3">
    <source>
        <dbReference type="SAM" id="MobiDB-lite"/>
    </source>
</evidence>
<evidence type="ECO:0000269" key="4">
    <source>
    </source>
</evidence>
<evidence type="ECO:0000269" key="5">
    <source>
    </source>
</evidence>
<evidence type="ECO:0000303" key="6">
    <source>
    </source>
</evidence>
<evidence type="ECO:0007829" key="7">
    <source>
        <dbReference type="PDB" id="4JWF"/>
    </source>
</evidence>
<evidence type="ECO:0007829" key="8">
    <source>
        <dbReference type="PDB" id="4JWG"/>
    </source>
</evidence>
<evidence type="ECO:0007829" key="9">
    <source>
        <dbReference type="PDB" id="4JWH"/>
    </source>
</evidence>
<keyword id="KW-0002">3D-structure</keyword>
<keyword id="KW-0963">Cytoplasm</keyword>
<keyword id="KW-0489">Methyltransferase</keyword>
<keyword id="KW-0539">Nucleus</keyword>
<keyword id="KW-0597">Phosphoprotein</keyword>
<keyword id="KW-1185">Reference proteome</keyword>
<keyword id="KW-0949">S-adenosyl-L-methionine</keyword>
<keyword id="KW-0808">Transferase</keyword>
<keyword id="KW-0819">tRNA processing</keyword>
<dbReference type="EC" id="2.1.1.221" evidence="5"/>
<dbReference type="EMBL" id="CU329670">
    <property type="protein sequence ID" value="CAB11070.1"/>
    <property type="molecule type" value="Genomic_DNA"/>
</dbReference>
<dbReference type="PIR" id="T39016">
    <property type="entry name" value="T39016"/>
</dbReference>
<dbReference type="RefSeq" id="NP_593764.1">
    <property type="nucleotide sequence ID" value="NM_001019194.2"/>
</dbReference>
<dbReference type="PDB" id="4JWF">
    <property type="method" value="X-ray"/>
    <property type="resolution" value="2.40 A"/>
    <property type="chains" value="A/B=74-281"/>
</dbReference>
<dbReference type="PDB" id="4JWG">
    <property type="method" value="X-ray"/>
    <property type="resolution" value="2.50 A"/>
    <property type="chains" value="A=74-281"/>
</dbReference>
<dbReference type="PDB" id="4JWH">
    <property type="method" value="X-ray"/>
    <property type="resolution" value="2.04 A"/>
    <property type="chains" value="A/B=1-304"/>
</dbReference>
<dbReference type="PDBsum" id="4JWF"/>
<dbReference type="PDBsum" id="4JWG"/>
<dbReference type="PDBsum" id="4JWH"/>
<dbReference type="SMR" id="O14214"/>
<dbReference type="BioGRID" id="279743">
    <property type="interactions" value="129"/>
</dbReference>
<dbReference type="FunCoup" id="O14214">
    <property type="interactions" value="785"/>
</dbReference>
<dbReference type="STRING" id="284812.O14214"/>
<dbReference type="iPTMnet" id="O14214"/>
<dbReference type="PaxDb" id="4896-SPAC6B12.09.1"/>
<dbReference type="EnsemblFungi" id="SPAC6B12.09.1">
    <property type="protein sequence ID" value="SPAC6B12.09.1:pep"/>
    <property type="gene ID" value="SPAC6B12.09"/>
</dbReference>
<dbReference type="GeneID" id="2543319"/>
<dbReference type="KEGG" id="spo:2543319"/>
<dbReference type="PomBase" id="SPAC6B12.09">
    <property type="gene designation" value="trm10"/>
</dbReference>
<dbReference type="VEuPathDB" id="FungiDB:SPAC6B12.09"/>
<dbReference type="eggNOG" id="KOG2967">
    <property type="taxonomic scope" value="Eukaryota"/>
</dbReference>
<dbReference type="HOGENOM" id="CLU_034384_7_0_1"/>
<dbReference type="InParanoid" id="O14214"/>
<dbReference type="OMA" id="FKKNDGW"/>
<dbReference type="PhylomeDB" id="O14214"/>
<dbReference type="BRENDA" id="2.1.1.221">
    <property type="organism ID" value="5613"/>
</dbReference>
<dbReference type="EvolutionaryTrace" id="O14214"/>
<dbReference type="PRO" id="PR:O14214"/>
<dbReference type="Proteomes" id="UP000002485">
    <property type="component" value="Chromosome I"/>
</dbReference>
<dbReference type="GO" id="GO:0005737">
    <property type="term" value="C:cytoplasm"/>
    <property type="evidence" value="ECO:0000266"/>
    <property type="project" value="PomBase"/>
</dbReference>
<dbReference type="GO" id="GO:0005730">
    <property type="term" value="C:nucleolus"/>
    <property type="evidence" value="ECO:0007005"/>
    <property type="project" value="PomBase"/>
</dbReference>
<dbReference type="GO" id="GO:0005634">
    <property type="term" value="C:nucleus"/>
    <property type="evidence" value="ECO:0007005"/>
    <property type="project" value="PomBase"/>
</dbReference>
<dbReference type="GO" id="GO:0052905">
    <property type="term" value="F:tRNA (guanosine(9)-N1)-methyltransferase activity"/>
    <property type="evidence" value="ECO:0000314"/>
    <property type="project" value="PomBase"/>
</dbReference>
<dbReference type="GO" id="GO:0000049">
    <property type="term" value="F:tRNA binding"/>
    <property type="evidence" value="ECO:0000318"/>
    <property type="project" value="GO_Central"/>
</dbReference>
<dbReference type="GO" id="GO:0002939">
    <property type="term" value="P:tRNA N1-guanine methylation"/>
    <property type="evidence" value="ECO:0000314"/>
    <property type="project" value="PomBase"/>
</dbReference>
<dbReference type="CDD" id="cd18089">
    <property type="entry name" value="SPOUT_Trm10-like"/>
    <property type="match status" value="1"/>
</dbReference>
<dbReference type="DisProt" id="DP00798"/>
<dbReference type="FunFam" id="3.40.1280.30:FF:000001">
    <property type="entry name" value="tRNA methyltransferase 10 homolog A"/>
    <property type="match status" value="1"/>
</dbReference>
<dbReference type="Gene3D" id="3.40.1280.30">
    <property type="match status" value="1"/>
</dbReference>
<dbReference type="InterPro" id="IPR028564">
    <property type="entry name" value="MT_TRM10-typ"/>
</dbReference>
<dbReference type="InterPro" id="IPR038459">
    <property type="entry name" value="MT_TRM10-typ_sf"/>
</dbReference>
<dbReference type="InterPro" id="IPR016653">
    <property type="entry name" value="TRM10/TRM10A"/>
</dbReference>
<dbReference type="InterPro" id="IPR007356">
    <property type="entry name" value="tRNA_m1G_MeTrfase_euk"/>
</dbReference>
<dbReference type="InterPro" id="IPR016009">
    <property type="entry name" value="tRNA_MeTrfase_TRMD/TRM10"/>
</dbReference>
<dbReference type="PANTHER" id="PTHR13563">
    <property type="entry name" value="TRNA (GUANINE-9-) METHYLTRANSFERASE"/>
    <property type="match status" value="1"/>
</dbReference>
<dbReference type="PANTHER" id="PTHR13563:SF13">
    <property type="entry name" value="TRNA METHYLTRANSFERASE 10 HOMOLOG A"/>
    <property type="match status" value="1"/>
</dbReference>
<dbReference type="Pfam" id="PF01746">
    <property type="entry name" value="tRNA_m1G_MT"/>
    <property type="match status" value="1"/>
</dbReference>
<dbReference type="PIRSF" id="PIRSF016323">
    <property type="entry name" value="tRNA_m1G_mtfrase_met"/>
    <property type="match status" value="1"/>
</dbReference>
<dbReference type="PROSITE" id="PS51675">
    <property type="entry name" value="SAM_MT_TRM10"/>
    <property type="match status" value="1"/>
</dbReference>
<protein>
    <recommendedName>
        <fullName evidence="6">tRNA (guanine(9)-N1)-methyltransferase</fullName>
        <ecNumber evidence="5">2.1.1.221</ecNumber>
    </recommendedName>
    <alternativeName>
        <fullName evidence="6">tRNA methyltransferase 10</fullName>
    </alternativeName>
    <alternativeName>
        <fullName evidence="6">tRNA(m1G9)-methyltransferase</fullName>
        <shortName evidence="6">tRNA(m1G9)MTase</shortName>
    </alternativeName>
</protein>
<feature type="chain" id="PRO_0000060518" description="tRNA (guanine(9)-N1)-methyltransferase">
    <location>
        <begin position="1"/>
        <end position="304"/>
    </location>
</feature>
<feature type="domain" description="SAM-dependent MTase TRM10-type" evidence="2">
    <location>
        <begin position="81"/>
        <end position="276"/>
    </location>
</feature>
<feature type="region of interest" description="Disordered" evidence="3">
    <location>
        <begin position="1"/>
        <end position="72"/>
    </location>
</feature>
<feature type="region of interest" description="Disordered" evidence="3">
    <location>
        <begin position="282"/>
        <end position="304"/>
    </location>
</feature>
<feature type="compositionally biased region" description="Basic and acidic residues" evidence="3">
    <location>
        <begin position="1"/>
        <end position="26"/>
    </location>
</feature>
<feature type="compositionally biased region" description="Basic and acidic residues" evidence="3">
    <location>
        <begin position="42"/>
        <end position="72"/>
    </location>
</feature>
<feature type="active site" description="Proton acceptor" evidence="5">
    <location>
        <position position="207"/>
    </location>
</feature>
<feature type="binding site" evidence="5">
    <location>
        <position position="183"/>
    </location>
    <ligand>
        <name>S-adenosyl-L-methionine</name>
        <dbReference type="ChEBI" id="CHEBI:59789"/>
    </ligand>
</feature>
<feature type="binding site" evidence="5">
    <location>
        <position position="203"/>
    </location>
    <ligand>
        <name>S-adenosyl-L-methionine</name>
        <dbReference type="ChEBI" id="CHEBI:59789"/>
    </ligand>
</feature>
<feature type="binding site" evidence="5">
    <location>
        <begin position="207"/>
        <end position="211"/>
    </location>
    <ligand>
        <name>S-adenosyl-L-methionine</name>
        <dbReference type="ChEBI" id="CHEBI:59789"/>
    </ligand>
</feature>
<feature type="binding site" evidence="5">
    <location>
        <position position="215"/>
    </location>
    <ligand>
        <name>S-adenosyl-L-methionine</name>
        <dbReference type="ChEBI" id="CHEBI:59789"/>
    </ligand>
</feature>
<feature type="binding site" evidence="5">
    <location>
        <position position="229"/>
    </location>
    <ligand>
        <name>S-adenosyl-L-methionine</name>
        <dbReference type="ChEBI" id="CHEBI:59789"/>
    </ligand>
</feature>
<feature type="binding site" evidence="5">
    <location>
        <begin position="241"/>
        <end position="243"/>
    </location>
    <ligand>
        <name>S-adenosyl-L-methionine</name>
        <dbReference type="ChEBI" id="CHEBI:59789"/>
    </ligand>
</feature>
<feature type="modified residue" description="Phosphoserine" evidence="4">
    <location>
        <position position="296"/>
    </location>
</feature>
<feature type="mutagenesis site" description="Completely abolishes interaction with tRNA; when associated with E-121 and E-127." evidence="5">
    <original>K</original>
    <variation>E</variation>
    <location>
        <position position="110"/>
    </location>
</feature>
<feature type="mutagenesis site" description="Completely abolishes catalytic activity." evidence="5">
    <original>Q</original>
    <variation>A</variation>
    <location>
        <position position="118"/>
    </location>
</feature>
<feature type="mutagenesis site" description="Completely abolishes interaction with tRNA; when associated with E-110 and E-127." evidence="5">
    <original>R</original>
    <variation>E</variation>
    <location>
        <position position="121"/>
    </location>
</feature>
<feature type="mutagenesis site" description="Completely abolishes interaction with tRNA; when associated with E-110 and E-121." evidence="5">
    <original>R</original>
    <variation>E</variation>
    <location>
        <position position="127"/>
    </location>
</feature>
<feature type="mutagenesis site" description="Completely abolishes interaction with tRNA; when associated with E-153." evidence="5">
    <original>R</original>
    <variation>E</variation>
    <location>
        <position position="147"/>
    </location>
</feature>
<feature type="mutagenesis site" description="Completely abolishes interaction with tRNA; when associated with E-147." evidence="5">
    <original>K</original>
    <variation>E</variation>
    <location>
        <position position="153"/>
    </location>
</feature>
<feature type="mutagenesis site" description="Reduces catalytic activity to 19%." evidence="5">
    <original>V</original>
    <variation>A</variation>
    <location>
        <position position="206"/>
    </location>
</feature>
<feature type="mutagenesis site" description="Completely abolishes catalytic activity." evidence="5">
    <original>D</original>
    <variation>N</variation>
    <location>
        <position position="207"/>
    </location>
</feature>
<feature type="mutagenesis site" description="Reduces catalytic activity to 72%." evidence="5">
    <original>K</original>
    <variation>A</variation>
    <location>
        <position position="208"/>
    </location>
</feature>
<feature type="mutagenesis site" description="Has weaker affinity for S-adenosyl-L-methionine and reduces catalytic activity to 10%." evidence="5">
    <original>N</original>
    <variation>A</variation>
    <location>
        <position position="209"/>
    </location>
</feature>
<feature type="mutagenesis site" description="Reduces catalytic activity to 35%." evidence="5">
    <original>T</original>
    <variation>A</variation>
    <location>
        <position position="244"/>
    </location>
</feature>
<feature type="strand" evidence="9">
    <location>
        <begin position="96"/>
        <end position="100"/>
    </location>
</feature>
<feature type="helix" evidence="9">
    <location>
        <begin position="104"/>
        <end position="106"/>
    </location>
</feature>
<feature type="helix" evidence="9">
    <location>
        <begin position="109"/>
        <end position="128"/>
    </location>
</feature>
<feature type="strand" evidence="9">
    <location>
        <begin position="134"/>
        <end position="138"/>
    </location>
</feature>
<feature type="helix" evidence="9">
    <location>
        <begin position="142"/>
        <end position="152"/>
    </location>
</feature>
<feature type="helix" evidence="9">
    <location>
        <begin position="155"/>
        <end position="158"/>
    </location>
</feature>
<feature type="strand" evidence="9">
    <location>
        <begin position="160"/>
        <end position="164"/>
    </location>
</feature>
<feature type="helix" evidence="9">
    <location>
        <begin position="169"/>
        <end position="172"/>
    </location>
</feature>
<feature type="helix" evidence="9">
    <location>
        <begin position="174"/>
        <end position="179"/>
    </location>
</feature>
<feature type="strand" evidence="9">
    <location>
        <begin position="180"/>
        <end position="183"/>
    </location>
</feature>
<feature type="strand" evidence="9">
    <location>
        <begin position="188"/>
        <end position="190"/>
    </location>
</feature>
<feature type="strand" evidence="9">
    <location>
        <begin position="199"/>
        <end position="203"/>
    </location>
</feature>
<feature type="helix" evidence="8">
    <location>
        <begin position="208"/>
        <end position="210"/>
    </location>
</feature>
<feature type="helix" evidence="9">
    <location>
        <begin position="214"/>
        <end position="222"/>
    </location>
</feature>
<feature type="strand" evidence="9">
    <location>
        <begin position="225"/>
        <end position="228"/>
    </location>
</feature>
<feature type="turn" evidence="9">
    <location>
        <begin position="232"/>
        <end position="234"/>
    </location>
</feature>
<feature type="strand" evidence="7">
    <location>
        <begin position="237"/>
        <end position="239"/>
    </location>
</feature>
<feature type="helix" evidence="9">
    <location>
        <begin position="245"/>
        <end position="258"/>
    </location>
</feature>
<feature type="helix" evidence="9">
    <location>
        <begin position="261"/>
        <end position="268"/>
    </location>
</feature>
<gene>
    <name evidence="6" type="primary">trm10</name>
    <name type="ORF">SPAC6B12.09</name>
</gene>
<reference key="1">
    <citation type="journal article" date="2002" name="Nature">
        <title>The genome sequence of Schizosaccharomyces pombe.</title>
        <authorList>
            <person name="Wood V."/>
            <person name="Gwilliam R."/>
            <person name="Rajandream M.A."/>
            <person name="Lyne M.H."/>
            <person name="Lyne R."/>
            <person name="Stewart A."/>
            <person name="Sgouros J.G."/>
            <person name="Peat N."/>
            <person name="Hayles J."/>
            <person name="Baker S.G."/>
            <person name="Basham D."/>
            <person name="Bowman S."/>
            <person name="Brooks K."/>
            <person name="Brown D."/>
            <person name="Brown S."/>
            <person name="Chillingworth T."/>
            <person name="Churcher C.M."/>
            <person name="Collins M."/>
            <person name="Connor R."/>
            <person name="Cronin A."/>
            <person name="Davis P."/>
            <person name="Feltwell T."/>
            <person name="Fraser A."/>
            <person name="Gentles S."/>
            <person name="Goble A."/>
            <person name="Hamlin N."/>
            <person name="Harris D.E."/>
            <person name="Hidalgo J."/>
            <person name="Hodgson G."/>
            <person name="Holroyd S."/>
            <person name="Hornsby T."/>
            <person name="Howarth S."/>
            <person name="Huckle E.J."/>
            <person name="Hunt S."/>
            <person name="Jagels K."/>
            <person name="James K.D."/>
            <person name="Jones L."/>
            <person name="Jones M."/>
            <person name="Leather S."/>
            <person name="McDonald S."/>
            <person name="McLean J."/>
            <person name="Mooney P."/>
            <person name="Moule S."/>
            <person name="Mungall K.L."/>
            <person name="Murphy L.D."/>
            <person name="Niblett D."/>
            <person name="Odell C."/>
            <person name="Oliver K."/>
            <person name="O'Neil S."/>
            <person name="Pearson D."/>
            <person name="Quail M.A."/>
            <person name="Rabbinowitsch E."/>
            <person name="Rutherford K.M."/>
            <person name="Rutter S."/>
            <person name="Saunders D."/>
            <person name="Seeger K."/>
            <person name="Sharp S."/>
            <person name="Skelton J."/>
            <person name="Simmonds M.N."/>
            <person name="Squares R."/>
            <person name="Squares S."/>
            <person name="Stevens K."/>
            <person name="Taylor K."/>
            <person name="Taylor R.G."/>
            <person name="Tivey A."/>
            <person name="Walsh S.V."/>
            <person name="Warren T."/>
            <person name="Whitehead S."/>
            <person name="Woodward J.R."/>
            <person name="Volckaert G."/>
            <person name="Aert R."/>
            <person name="Robben J."/>
            <person name="Grymonprez B."/>
            <person name="Weltjens I."/>
            <person name="Vanstreels E."/>
            <person name="Rieger M."/>
            <person name="Schaefer M."/>
            <person name="Mueller-Auer S."/>
            <person name="Gabel C."/>
            <person name="Fuchs M."/>
            <person name="Duesterhoeft A."/>
            <person name="Fritzc C."/>
            <person name="Holzer E."/>
            <person name="Moestl D."/>
            <person name="Hilbert H."/>
            <person name="Borzym K."/>
            <person name="Langer I."/>
            <person name="Beck A."/>
            <person name="Lehrach H."/>
            <person name="Reinhardt R."/>
            <person name="Pohl T.M."/>
            <person name="Eger P."/>
            <person name="Zimmermann W."/>
            <person name="Wedler H."/>
            <person name="Wambutt R."/>
            <person name="Purnelle B."/>
            <person name="Goffeau A."/>
            <person name="Cadieu E."/>
            <person name="Dreano S."/>
            <person name="Gloux S."/>
            <person name="Lelaure V."/>
            <person name="Mottier S."/>
            <person name="Galibert F."/>
            <person name="Aves S.J."/>
            <person name="Xiang Z."/>
            <person name="Hunt C."/>
            <person name="Moore K."/>
            <person name="Hurst S.M."/>
            <person name="Lucas M."/>
            <person name="Rochet M."/>
            <person name="Gaillardin C."/>
            <person name="Tallada V.A."/>
            <person name="Garzon A."/>
            <person name="Thode G."/>
            <person name="Daga R.R."/>
            <person name="Cruzado L."/>
            <person name="Jimenez J."/>
            <person name="Sanchez M."/>
            <person name="del Rey F."/>
            <person name="Benito J."/>
            <person name="Dominguez A."/>
            <person name="Revuelta J.L."/>
            <person name="Moreno S."/>
            <person name="Armstrong J."/>
            <person name="Forsburg S.L."/>
            <person name="Cerutti L."/>
            <person name="Lowe T."/>
            <person name="McCombie W.R."/>
            <person name="Paulsen I."/>
            <person name="Potashkin J."/>
            <person name="Shpakovski G.V."/>
            <person name="Ussery D."/>
            <person name="Barrell B.G."/>
            <person name="Nurse P."/>
        </authorList>
    </citation>
    <scope>NUCLEOTIDE SEQUENCE [LARGE SCALE GENOMIC DNA]</scope>
    <source>
        <strain>972 / ATCC 24843</strain>
    </source>
</reference>
<reference key="2">
    <citation type="journal article" date="2008" name="J. Proteome Res.">
        <title>Phosphoproteome analysis of fission yeast.</title>
        <authorList>
            <person name="Wilson-Grady J.T."/>
            <person name="Villen J."/>
            <person name="Gygi S.P."/>
        </authorList>
    </citation>
    <scope>PHOSPHORYLATION [LARGE SCALE ANALYSIS] AT SER-296</scope>
    <scope>IDENTIFICATION BY MASS SPECTROMETRY</scope>
</reference>
<reference key="3">
    <citation type="journal article" date="2014" name="Nucleic Acids Res.">
        <title>Crystal structure of tRNA m1G9 methyltransferase Trm10: insight into the catalytic mechanism and recognition of tRNA substrate.</title>
        <authorList>
            <person name="Shao Z."/>
            <person name="Yan W."/>
            <person name="Peng J."/>
            <person name="Zuo X."/>
            <person name="Zou Y."/>
            <person name="Li F."/>
            <person name="Gong D."/>
            <person name="Ma R."/>
            <person name="Wu J."/>
            <person name="Shi Y."/>
            <person name="Zhang Z."/>
            <person name="Teng M."/>
            <person name="Li X."/>
            <person name="Gong Q."/>
        </authorList>
    </citation>
    <scope>X-RAY CRYSTALLOGRAPHY (2.04 ANGSTROMS) IN COMPLEX WITH S-ADENOSYL-L-HOMOCYSTEINE</scope>
    <scope>FUNCTION</scope>
    <scope>CATALYTIC ACTIVITY</scope>
    <scope>BIOPHYSICOCHEMICAL PROPERTIES</scope>
    <scope>ACTIVE SITE</scope>
    <scope>SUBUNIT</scope>
    <scope>MUTAGENESIS OF LYS-110; GLN-118; ARG-121; ARG-127; ARG-147; LYS-153; VAL-206; ASP-207; LYS-208; ASN-209 AND THR-244</scope>
</reference>
<organism>
    <name type="scientific">Schizosaccharomyces pombe (strain 972 / ATCC 24843)</name>
    <name type="common">Fission yeast</name>
    <dbReference type="NCBI Taxonomy" id="284812"/>
    <lineage>
        <taxon>Eukaryota</taxon>
        <taxon>Fungi</taxon>
        <taxon>Dikarya</taxon>
        <taxon>Ascomycota</taxon>
        <taxon>Taphrinomycotina</taxon>
        <taxon>Schizosaccharomycetes</taxon>
        <taxon>Schizosaccharomycetales</taxon>
        <taxon>Schizosaccharomycetaceae</taxon>
        <taxon>Schizosaccharomyces</taxon>
    </lineage>
</organism>